<feature type="peptide" id="PRO_0000043687" description="FMRFamide-like neuropeptide FLP4">
    <location>
        <begin position="1"/>
        <end position="8"/>
    </location>
</feature>
<feature type="modified residue" description="Phenylalanine amide" evidence="1">
    <location>
        <position position="8"/>
    </location>
</feature>
<evidence type="ECO:0000269" key="1">
    <source ref="1"/>
</evidence>
<evidence type="ECO:0000305" key="2"/>
<name>FAR4_MACRS</name>
<dbReference type="GO" id="GO:0005576">
    <property type="term" value="C:extracellular region"/>
    <property type="evidence" value="ECO:0007669"/>
    <property type="project" value="UniProtKB-SubCell"/>
</dbReference>
<dbReference type="GO" id="GO:0007218">
    <property type="term" value="P:neuropeptide signaling pathway"/>
    <property type="evidence" value="ECO:0000304"/>
    <property type="project" value="UniProtKB"/>
</dbReference>
<reference evidence="2" key="1">
    <citation type="journal article" date="1998" name="Comp. Biochem. Physiol.">
        <title>Novel FMRFamide-like neuropeptides from the eyestalk of the giant freshwater prawn Macrobrachium rosenbergii.</title>
        <authorList>
            <person name="Sithigorngul P."/>
            <person name="Saraithongkum W."/>
            <person name="Jaideechoey S."/>
            <person name="Longyant S."/>
            <person name="Sithigorngul W."/>
        </authorList>
    </citation>
    <scope>PROTEIN SEQUENCE</scope>
    <scope>AMIDATION AT PHE-8</scope>
    <scope>MASS SPECTROMETRY</scope>
    <source>
        <tissue>Eyestalk</tissue>
    </source>
</reference>
<proteinExistence type="evidence at protein level"/>
<protein>
    <recommendedName>
        <fullName>FMRFamide-like neuropeptide FLP4</fullName>
    </recommendedName>
    <alternativeName>
        <fullName>APALRLRF-amide</fullName>
    </alternativeName>
</protein>
<organism evidence="2">
    <name type="scientific">Macrobrachium rosenbergii</name>
    <name type="common">Giant fresh water prawn</name>
    <dbReference type="NCBI Taxonomy" id="79674"/>
    <lineage>
        <taxon>Eukaryota</taxon>
        <taxon>Metazoa</taxon>
        <taxon>Ecdysozoa</taxon>
        <taxon>Arthropoda</taxon>
        <taxon>Crustacea</taxon>
        <taxon>Multicrustacea</taxon>
        <taxon>Malacostraca</taxon>
        <taxon>Eumalacostraca</taxon>
        <taxon>Eucarida</taxon>
        <taxon>Decapoda</taxon>
        <taxon>Pleocyemata</taxon>
        <taxon>Caridea</taxon>
        <taxon>Palaemonoidea</taxon>
        <taxon>Palaemonidae</taxon>
        <taxon>Macrobrachium</taxon>
    </lineage>
</organism>
<keyword id="KW-0027">Amidation</keyword>
<keyword id="KW-0903">Direct protein sequencing</keyword>
<keyword id="KW-0527">Neuropeptide</keyword>
<keyword id="KW-0964">Secreted</keyword>
<comment type="subcellular location">
    <subcellularLocation>
        <location>Secreted</location>
    </subcellularLocation>
</comment>
<comment type="mass spectrometry" mass="943.0" method="MALDI" evidence="1"/>
<comment type="similarity">
    <text evidence="2">Belongs to the FARP (FMRFamide related peptide) family.</text>
</comment>
<accession>P83277</accession>
<sequence length="8" mass="943">APALRLRF</sequence>